<dbReference type="EC" id="2.1.1.177" evidence="1"/>
<dbReference type="EMBL" id="CP001145">
    <property type="protein sequence ID" value="ACI17077.1"/>
    <property type="molecule type" value="Genomic_DNA"/>
</dbReference>
<dbReference type="RefSeq" id="WP_012543729.1">
    <property type="nucleotide sequence ID" value="NC_011295.1"/>
</dbReference>
<dbReference type="SMR" id="B5Y9X7"/>
<dbReference type="STRING" id="309798.COPRO5265_1272"/>
<dbReference type="KEGG" id="cpo:COPRO5265_1272"/>
<dbReference type="eggNOG" id="COG1576">
    <property type="taxonomic scope" value="Bacteria"/>
</dbReference>
<dbReference type="HOGENOM" id="CLU_100552_0_0_9"/>
<dbReference type="OrthoDB" id="9806643at2"/>
<dbReference type="Proteomes" id="UP000001732">
    <property type="component" value="Chromosome"/>
</dbReference>
<dbReference type="GO" id="GO:0005737">
    <property type="term" value="C:cytoplasm"/>
    <property type="evidence" value="ECO:0007669"/>
    <property type="project" value="UniProtKB-SubCell"/>
</dbReference>
<dbReference type="GO" id="GO:0070038">
    <property type="term" value="F:rRNA (pseudouridine-N3-)-methyltransferase activity"/>
    <property type="evidence" value="ECO:0007669"/>
    <property type="project" value="UniProtKB-UniRule"/>
</dbReference>
<dbReference type="CDD" id="cd18081">
    <property type="entry name" value="RlmH-like"/>
    <property type="match status" value="1"/>
</dbReference>
<dbReference type="Gene3D" id="3.40.1280.10">
    <property type="match status" value="1"/>
</dbReference>
<dbReference type="HAMAP" id="MF_00658">
    <property type="entry name" value="23SrRNA_methyltr_H"/>
    <property type="match status" value="1"/>
</dbReference>
<dbReference type="InterPro" id="IPR029028">
    <property type="entry name" value="Alpha/beta_knot_MTases"/>
</dbReference>
<dbReference type="InterPro" id="IPR003742">
    <property type="entry name" value="RlmH-like"/>
</dbReference>
<dbReference type="InterPro" id="IPR029026">
    <property type="entry name" value="tRNA_m1G_MTases_N"/>
</dbReference>
<dbReference type="PANTHER" id="PTHR33603">
    <property type="entry name" value="METHYLTRANSFERASE"/>
    <property type="match status" value="1"/>
</dbReference>
<dbReference type="PANTHER" id="PTHR33603:SF1">
    <property type="entry name" value="RIBOSOMAL RNA LARGE SUBUNIT METHYLTRANSFERASE H"/>
    <property type="match status" value="1"/>
</dbReference>
<dbReference type="Pfam" id="PF02590">
    <property type="entry name" value="SPOUT_MTase"/>
    <property type="match status" value="1"/>
</dbReference>
<dbReference type="PIRSF" id="PIRSF004505">
    <property type="entry name" value="MT_bac"/>
    <property type="match status" value="1"/>
</dbReference>
<dbReference type="SUPFAM" id="SSF75217">
    <property type="entry name" value="alpha/beta knot"/>
    <property type="match status" value="1"/>
</dbReference>
<evidence type="ECO:0000255" key="1">
    <source>
        <dbReference type="HAMAP-Rule" id="MF_00658"/>
    </source>
</evidence>
<name>RLMH_COPPD</name>
<reference key="1">
    <citation type="submission" date="2008-08" db="EMBL/GenBank/DDBJ databases">
        <title>The complete genome sequence of Coprothermobacter proteolyticus strain ATCC 5245 / DSM 5265 / BT.</title>
        <authorList>
            <person name="Dodson R.J."/>
            <person name="Durkin A.S."/>
            <person name="Wu M."/>
            <person name="Eisen J."/>
            <person name="Sutton G."/>
        </authorList>
    </citation>
    <scope>NUCLEOTIDE SEQUENCE [LARGE SCALE GENOMIC DNA]</scope>
    <source>
        <strain>ATCC 35245 / DSM 5265 / OCM 4 / BT</strain>
    </source>
</reference>
<protein>
    <recommendedName>
        <fullName evidence="1">Ribosomal RNA large subunit methyltransferase H</fullName>
        <ecNumber evidence="1">2.1.1.177</ecNumber>
    </recommendedName>
    <alternativeName>
        <fullName evidence="1">23S rRNA (pseudouridine1915-N3)-methyltransferase</fullName>
    </alternativeName>
    <alternativeName>
        <fullName evidence="1">23S rRNA m3Psi1915 methyltransferase</fullName>
    </alternativeName>
    <alternativeName>
        <fullName evidence="1">rRNA (pseudouridine-N3-)-methyltransferase RlmH</fullName>
    </alternativeName>
</protein>
<feature type="chain" id="PRO_0000366584" description="Ribosomal RNA large subunit methyltransferase H">
    <location>
        <begin position="1"/>
        <end position="139"/>
    </location>
</feature>
<feature type="binding site" evidence="1">
    <location>
        <position position="56"/>
    </location>
    <ligand>
        <name>S-adenosyl-L-methionine</name>
        <dbReference type="ChEBI" id="CHEBI:59789"/>
    </ligand>
</feature>
<feature type="binding site" evidence="1">
    <location>
        <position position="88"/>
    </location>
    <ligand>
        <name>S-adenosyl-L-methionine</name>
        <dbReference type="ChEBI" id="CHEBI:59789"/>
    </ligand>
</feature>
<feature type="binding site" evidence="1">
    <location>
        <begin position="107"/>
        <end position="112"/>
    </location>
    <ligand>
        <name>S-adenosyl-L-methionine</name>
        <dbReference type="ChEBI" id="CHEBI:59789"/>
    </ligand>
</feature>
<proteinExistence type="inferred from homology"/>
<gene>
    <name evidence="1" type="primary">rlmH</name>
    <name type="ordered locus">COPRO5265_1272</name>
</gene>
<sequence>MKVHIVAVGKLKNGYVAEGVKDYYERIKHYIPITMVETKQENPFNMTTKEGFHIVLDAQGKLMTSEEFASFIEDLLTTQSNDVYFYIGGPEGFSEAFKNNAQMRISLSLMTFPHELARLFFLEQLYRALTIIKGEKYHK</sequence>
<organism>
    <name type="scientific">Coprothermobacter proteolyticus (strain ATCC 35245 / DSM 5265 / OCM 4 / BT)</name>
    <dbReference type="NCBI Taxonomy" id="309798"/>
    <lineage>
        <taxon>Bacteria</taxon>
        <taxon>Pseudomonadati</taxon>
        <taxon>Coprothermobacterota</taxon>
        <taxon>Coprothermobacteria</taxon>
        <taxon>Coprothermobacterales</taxon>
        <taxon>Coprothermobacteraceae</taxon>
        <taxon>Coprothermobacter</taxon>
    </lineage>
</organism>
<keyword id="KW-0963">Cytoplasm</keyword>
<keyword id="KW-0489">Methyltransferase</keyword>
<keyword id="KW-1185">Reference proteome</keyword>
<keyword id="KW-0698">rRNA processing</keyword>
<keyword id="KW-0949">S-adenosyl-L-methionine</keyword>
<keyword id="KW-0808">Transferase</keyword>
<accession>B5Y9X7</accession>
<comment type="function">
    <text evidence="1">Specifically methylates the pseudouridine at position 1915 (m3Psi1915) in 23S rRNA.</text>
</comment>
<comment type="catalytic activity">
    <reaction evidence="1">
        <text>pseudouridine(1915) in 23S rRNA + S-adenosyl-L-methionine = N(3)-methylpseudouridine(1915) in 23S rRNA + S-adenosyl-L-homocysteine + H(+)</text>
        <dbReference type="Rhea" id="RHEA:42752"/>
        <dbReference type="Rhea" id="RHEA-COMP:10221"/>
        <dbReference type="Rhea" id="RHEA-COMP:10222"/>
        <dbReference type="ChEBI" id="CHEBI:15378"/>
        <dbReference type="ChEBI" id="CHEBI:57856"/>
        <dbReference type="ChEBI" id="CHEBI:59789"/>
        <dbReference type="ChEBI" id="CHEBI:65314"/>
        <dbReference type="ChEBI" id="CHEBI:74486"/>
        <dbReference type="EC" id="2.1.1.177"/>
    </reaction>
</comment>
<comment type="subunit">
    <text evidence="1">Homodimer.</text>
</comment>
<comment type="subcellular location">
    <subcellularLocation>
        <location evidence="1">Cytoplasm</location>
    </subcellularLocation>
</comment>
<comment type="similarity">
    <text evidence="1">Belongs to the RNA methyltransferase RlmH family.</text>
</comment>